<reference key="1">
    <citation type="submission" date="2008-08" db="EMBL/GenBank/DDBJ databases">
        <title>Complete sequence of Vibrio fischeri strain MJ11.</title>
        <authorList>
            <person name="Mandel M.J."/>
            <person name="Stabb E.V."/>
            <person name="Ruby E.G."/>
            <person name="Ferriera S."/>
            <person name="Johnson J."/>
            <person name="Kravitz S."/>
            <person name="Beeson K."/>
            <person name="Sutton G."/>
            <person name="Rogers Y.-H."/>
            <person name="Friedman R."/>
            <person name="Frazier M."/>
            <person name="Venter J.C."/>
        </authorList>
    </citation>
    <scope>NUCLEOTIDE SEQUENCE [LARGE SCALE GENOMIC DNA]</scope>
    <source>
        <strain>MJ11</strain>
    </source>
</reference>
<sequence length="206" mass="23372">MARYLGPKLKLSRREGTDLFLKSGVRAIDTKCKIDNAPGVHGARRGRLSEYGVQLREKQKVRRMYGVLEKQFRNYYKDAARLKGNTGENLLQLLEGRLDNVVYRMGFGATRAESRQLVSHKSILVNGKVVNVPSFKVAANDVVSIREKAKQQSRIKAALEVAEQREKPTWIEVDAGKMEGTFKRLPERSDLSADINEHLIVELYSK</sequence>
<name>RS4_ALIFM</name>
<keyword id="KW-0687">Ribonucleoprotein</keyword>
<keyword id="KW-0689">Ribosomal protein</keyword>
<keyword id="KW-0694">RNA-binding</keyword>
<keyword id="KW-0699">rRNA-binding</keyword>
<gene>
    <name evidence="1" type="primary">rpsD</name>
    <name type="ordered locus">VFMJ11_0249</name>
</gene>
<proteinExistence type="inferred from homology"/>
<organism>
    <name type="scientific">Aliivibrio fischeri (strain MJ11)</name>
    <name type="common">Vibrio fischeri</name>
    <dbReference type="NCBI Taxonomy" id="388396"/>
    <lineage>
        <taxon>Bacteria</taxon>
        <taxon>Pseudomonadati</taxon>
        <taxon>Pseudomonadota</taxon>
        <taxon>Gammaproteobacteria</taxon>
        <taxon>Vibrionales</taxon>
        <taxon>Vibrionaceae</taxon>
        <taxon>Aliivibrio</taxon>
    </lineage>
</organism>
<dbReference type="EMBL" id="CP001139">
    <property type="protein sequence ID" value="ACH65125.1"/>
    <property type="molecule type" value="Genomic_DNA"/>
</dbReference>
<dbReference type="RefSeq" id="WP_005417269.1">
    <property type="nucleotide sequence ID" value="NC_011184.1"/>
</dbReference>
<dbReference type="SMR" id="B5FGE0"/>
<dbReference type="GeneID" id="54162882"/>
<dbReference type="KEGG" id="vfm:VFMJ11_0249"/>
<dbReference type="HOGENOM" id="CLU_092403_0_2_6"/>
<dbReference type="Proteomes" id="UP000001857">
    <property type="component" value="Chromosome I"/>
</dbReference>
<dbReference type="GO" id="GO:0015935">
    <property type="term" value="C:small ribosomal subunit"/>
    <property type="evidence" value="ECO:0007669"/>
    <property type="project" value="InterPro"/>
</dbReference>
<dbReference type="GO" id="GO:0019843">
    <property type="term" value="F:rRNA binding"/>
    <property type="evidence" value="ECO:0007669"/>
    <property type="project" value="UniProtKB-UniRule"/>
</dbReference>
<dbReference type="GO" id="GO:0003735">
    <property type="term" value="F:structural constituent of ribosome"/>
    <property type="evidence" value="ECO:0007669"/>
    <property type="project" value="InterPro"/>
</dbReference>
<dbReference type="GO" id="GO:0042274">
    <property type="term" value="P:ribosomal small subunit biogenesis"/>
    <property type="evidence" value="ECO:0007669"/>
    <property type="project" value="TreeGrafter"/>
</dbReference>
<dbReference type="GO" id="GO:0006412">
    <property type="term" value="P:translation"/>
    <property type="evidence" value="ECO:0007669"/>
    <property type="project" value="UniProtKB-UniRule"/>
</dbReference>
<dbReference type="CDD" id="cd00165">
    <property type="entry name" value="S4"/>
    <property type="match status" value="1"/>
</dbReference>
<dbReference type="FunFam" id="1.10.1050.10:FF:000001">
    <property type="entry name" value="30S ribosomal protein S4"/>
    <property type="match status" value="1"/>
</dbReference>
<dbReference type="FunFam" id="3.10.290.10:FF:000001">
    <property type="entry name" value="30S ribosomal protein S4"/>
    <property type="match status" value="1"/>
</dbReference>
<dbReference type="Gene3D" id="1.10.1050.10">
    <property type="entry name" value="Ribosomal Protein S4 Delta 41, Chain A, domain 1"/>
    <property type="match status" value="1"/>
</dbReference>
<dbReference type="Gene3D" id="3.10.290.10">
    <property type="entry name" value="RNA-binding S4 domain"/>
    <property type="match status" value="1"/>
</dbReference>
<dbReference type="HAMAP" id="MF_01306_B">
    <property type="entry name" value="Ribosomal_uS4_B"/>
    <property type="match status" value="1"/>
</dbReference>
<dbReference type="InterPro" id="IPR022801">
    <property type="entry name" value="Ribosomal_uS4"/>
</dbReference>
<dbReference type="InterPro" id="IPR005709">
    <property type="entry name" value="Ribosomal_uS4_bac-type"/>
</dbReference>
<dbReference type="InterPro" id="IPR018079">
    <property type="entry name" value="Ribosomal_uS4_CS"/>
</dbReference>
<dbReference type="InterPro" id="IPR001912">
    <property type="entry name" value="Ribosomal_uS4_N"/>
</dbReference>
<dbReference type="InterPro" id="IPR002942">
    <property type="entry name" value="S4_RNA-bd"/>
</dbReference>
<dbReference type="InterPro" id="IPR036986">
    <property type="entry name" value="S4_RNA-bd_sf"/>
</dbReference>
<dbReference type="NCBIfam" id="NF003717">
    <property type="entry name" value="PRK05327.1"/>
    <property type="match status" value="1"/>
</dbReference>
<dbReference type="NCBIfam" id="TIGR01017">
    <property type="entry name" value="rpsD_bact"/>
    <property type="match status" value="1"/>
</dbReference>
<dbReference type="PANTHER" id="PTHR11831">
    <property type="entry name" value="30S 40S RIBOSOMAL PROTEIN"/>
    <property type="match status" value="1"/>
</dbReference>
<dbReference type="PANTHER" id="PTHR11831:SF4">
    <property type="entry name" value="SMALL RIBOSOMAL SUBUNIT PROTEIN US4M"/>
    <property type="match status" value="1"/>
</dbReference>
<dbReference type="Pfam" id="PF00163">
    <property type="entry name" value="Ribosomal_S4"/>
    <property type="match status" value="1"/>
</dbReference>
<dbReference type="Pfam" id="PF01479">
    <property type="entry name" value="S4"/>
    <property type="match status" value="1"/>
</dbReference>
<dbReference type="SMART" id="SM01390">
    <property type="entry name" value="Ribosomal_S4"/>
    <property type="match status" value="1"/>
</dbReference>
<dbReference type="SMART" id="SM00363">
    <property type="entry name" value="S4"/>
    <property type="match status" value="1"/>
</dbReference>
<dbReference type="SUPFAM" id="SSF55174">
    <property type="entry name" value="Alpha-L RNA-binding motif"/>
    <property type="match status" value="1"/>
</dbReference>
<dbReference type="PROSITE" id="PS00632">
    <property type="entry name" value="RIBOSOMAL_S4"/>
    <property type="match status" value="1"/>
</dbReference>
<dbReference type="PROSITE" id="PS50889">
    <property type="entry name" value="S4"/>
    <property type="match status" value="1"/>
</dbReference>
<evidence type="ECO:0000255" key="1">
    <source>
        <dbReference type="HAMAP-Rule" id="MF_01306"/>
    </source>
</evidence>
<evidence type="ECO:0000305" key="2"/>
<accession>B5FGE0</accession>
<comment type="function">
    <text evidence="1">One of the primary rRNA binding proteins, it binds directly to 16S rRNA where it nucleates assembly of the body of the 30S subunit.</text>
</comment>
<comment type="function">
    <text evidence="1">With S5 and S12 plays an important role in translational accuracy.</text>
</comment>
<comment type="subunit">
    <text evidence="1">Part of the 30S ribosomal subunit. Contacts protein S5. The interaction surface between S4 and S5 is involved in control of translational fidelity.</text>
</comment>
<comment type="similarity">
    <text evidence="1">Belongs to the universal ribosomal protein uS4 family.</text>
</comment>
<protein>
    <recommendedName>
        <fullName evidence="1">Small ribosomal subunit protein uS4</fullName>
    </recommendedName>
    <alternativeName>
        <fullName evidence="2">30S ribosomal protein S4</fullName>
    </alternativeName>
</protein>
<feature type="chain" id="PRO_1000140815" description="Small ribosomal subunit protein uS4">
    <location>
        <begin position="1"/>
        <end position="206"/>
    </location>
</feature>
<feature type="domain" description="S4 RNA-binding" evidence="1">
    <location>
        <begin position="96"/>
        <end position="158"/>
    </location>
</feature>